<evidence type="ECO:0000250" key="1">
    <source>
        <dbReference type="UniProtKB" id="P36575"/>
    </source>
</evidence>
<evidence type="ECO:0000250" key="2">
    <source>
        <dbReference type="UniProtKB" id="Q9EQP6"/>
    </source>
</evidence>
<evidence type="ECO:0000250" key="3">
    <source>
        <dbReference type="UniProtKB" id="Q9N0H5"/>
    </source>
</evidence>
<evidence type="ECO:0000305" key="4"/>
<protein>
    <recommendedName>
        <fullName>Arrestin-C</fullName>
    </recommendedName>
    <alternativeName>
        <fullName>Cone arrestin</fullName>
        <shortName>cArr</shortName>
    </alternativeName>
    <alternativeName>
        <fullName>Retinal cone arrestin-3</fullName>
    </alternativeName>
</protein>
<gene>
    <name type="primary">Arr3</name>
    <name type="synonym">Car</name>
</gene>
<sequence>LKHEDTNLASSTILRPGMNKELLGILVSYKVKVNLMVSYGGILGGLPASDVGVELPLILIHPKPPHGERAVATSSEDIVVEEFTQQNSQTQS</sequence>
<feature type="chain" id="PRO_0000205205" description="Arrestin-C">
    <location>
        <begin position="1" status="less than"/>
        <end position="92"/>
    </location>
</feature>
<feature type="non-terminal residue">
    <location>
        <position position="1"/>
    </location>
</feature>
<dbReference type="EMBL" id="U03628">
    <property type="protein sequence ID" value="AAA17552.1"/>
    <property type="molecule type" value="mRNA"/>
</dbReference>
<dbReference type="PIR" id="I70113">
    <property type="entry name" value="I70113"/>
</dbReference>
<dbReference type="SMR" id="P36576"/>
<dbReference type="STRING" id="10116.ENSRNOP00000068038"/>
<dbReference type="PhosphoSitePlus" id="P36576"/>
<dbReference type="jPOST" id="P36576"/>
<dbReference type="PaxDb" id="10116-ENSRNOP00000068038"/>
<dbReference type="UCSC" id="RGD:621385">
    <property type="organism name" value="rat"/>
</dbReference>
<dbReference type="AGR" id="RGD:621385"/>
<dbReference type="RGD" id="621385">
    <property type="gene designation" value="Arr3"/>
</dbReference>
<dbReference type="eggNOG" id="KOG3865">
    <property type="taxonomic scope" value="Eukaryota"/>
</dbReference>
<dbReference type="InParanoid" id="P36576"/>
<dbReference type="Proteomes" id="UP000002494">
    <property type="component" value="Unplaced"/>
</dbReference>
<dbReference type="GO" id="GO:0001917">
    <property type="term" value="C:photoreceptor inner segment"/>
    <property type="evidence" value="ECO:0000266"/>
    <property type="project" value="RGD"/>
</dbReference>
<dbReference type="GO" id="GO:0001750">
    <property type="term" value="C:photoreceptor outer segment"/>
    <property type="evidence" value="ECO:0000266"/>
    <property type="project" value="RGD"/>
</dbReference>
<dbReference type="GO" id="GO:0045202">
    <property type="term" value="C:synapse"/>
    <property type="evidence" value="ECO:0000266"/>
    <property type="project" value="RGD"/>
</dbReference>
<dbReference type="GO" id="GO:0002046">
    <property type="term" value="F:opsin binding"/>
    <property type="evidence" value="ECO:0000266"/>
    <property type="project" value="RGD"/>
</dbReference>
<dbReference type="GO" id="GO:0051219">
    <property type="term" value="F:phosphoprotein binding"/>
    <property type="evidence" value="ECO:0000266"/>
    <property type="project" value="RGD"/>
</dbReference>
<dbReference type="GO" id="GO:0019904">
    <property type="term" value="F:protein domain specific binding"/>
    <property type="evidence" value="ECO:0000353"/>
    <property type="project" value="RGD"/>
</dbReference>
<dbReference type="GO" id="GO:0006897">
    <property type="term" value="P:endocytosis"/>
    <property type="evidence" value="ECO:0000266"/>
    <property type="project" value="RGD"/>
</dbReference>
<dbReference type="GO" id="GO:0009968">
    <property type="term" value="P:negative regulation of signal transduction"/>
    <property type="evidence" value="ECO:0000304"/>
    <property type="project" value="RGD"/>
</dbReference>
<dbReference type="GO" id="GO:0007165">
    <property type="term" value="P:signal transduction"/>
    <property type="evidence" value="ECO:0007669"/>
    <property type="project" value="InterPro"/>
</dbReference>
<dbReference type="GO" id="GO:0007601">
    <property type="term" value="P:visual perception"/>
    <property type="evidence" value="ECO:0007669"/>
    <property type="project" value="UniProtKB-KW"/>
</dbReference>
<dbReference type="Gene3D" id="2.60.40.640">
    <property type="match status" value="1"/>
</dbReference>
<dbReference type="InterPro" id="IPR000698">
    <property type="entry name" value="Arrestin"/>
</dbReference>
<dbReference type="InterPro" id="IPR014752">
    <property type="entry name" value="Arrestin-like_C"/>
</dbReference>
<dbReference type="InterPro" id="IPR014756">
    <property type="entry name" value="Ig_E-set"/>
</dbReference>
<dbReference type="PANTHER" id="PTHR11792">
    <property type="entry name" value="ARRESTIN"/>
    <property type="match status" value="1"/>
</dbReference>
<dbReference type="PANTHER" id="PTHR11792:SF19">
    <property type="entry name" value="ARRESTIN-C"/>
    <property type="match status" value="1"/>
</dbReference>
<dbReference type="SUPFAM" id="SSF81296">
    <property type="entry name" value="E set domains"/>
    <property type="match status" value="1"/>
</dbReference>
<organism>
    <name type="scientific">Rattus norvegicus</name>
    <name type="common">Rat</name>
    <dbReference type="NCBI Taxonomy" id="10116"/>
    <lineage>
        <taxon>Eukaryota</taxon>
        <taxon>Metazoa</taxon>
        <taxon>Chordata</taxon>
        <taxon>Craniata</taxon>
        <taxon>Vertebrata</taxon>
        <taxon>Euteleostomi</taxon>
        <taxon>Mammalia</taxon>
        <taxon>Eutheria</taxon>
        <taxon>Euarchontoglires</taxon>
        <taxon>Glires</taxon>
        <taxon>Rodentia</taxon>
        <taxon>Myomorpha</taxon>
        <taxon>Muroidea</taxon>
        <taxon>Muridae</taxon>
        <taxon>Murinae</taxon>
        <taxon>Rattus</taxon>
    </lineage>
</organism>
<name>ARRC_RAT</name>
<keyword id="KW-0966">Cell projection</keyword>
<keyword id="KW-1015">Disulfide bond</keyword>
<keyword id="KW-1185">Reference proteome</keyword>
<keyword id="KW-0716">Sensory transduction</keyword>
<keyword id="KW-0844">Vision</keyword>
<proteinExistence type="evidence at transcript level"/>
<accession>P36576</accession>
<reference key="1">
    <citation type="journal article" date="1994" name="J. Biol. Chem.">
        <title>Cone arrestin identified by targeting expression of a functional family.</title>
        <authorList>
            <person name="Craft C.M."/>
            <person name="Whitmore D.H."/>
            <person name="Wiechmann A.F."/>
        </authorList>
    </citation>
    <scope>NUCLEOTIDE SEQUENCE [MRNA]</scope>
    <source>
        <strain>Sprague-Dawley</strain>
        <tissue>Pineal gland</tissue>
    </source>
</reference>
<comment type="function">
    <text>May play a role in an as yet undefined retina-specific signal transduction. Could bind to photoactivated-phosphorylated red/green opsins.</text>
</comment>
<comment type="subunit">
    <text evidence="1 3">Homodimer; disulfide-linked in response to retinal illumination (By similarity). Interacts with CXCR4; the interaction is dependent on the C-terminal phosphorylation of CXCR4 and modulates the calcium ion mobilization activity of CXCR4 (By similarity). Interacts with GPR84 (By similarity).</text>
</comment>
<comment type="subcellular location">
    <subcellularLocation>
        <location evidence="2">Photoreceptor inner segment</location>
    </subcellularLocation>
    <subcellularLocation>
        <location evidence="2">Cell projection</location>
        <location evidence="2">Cilium</location>
        <location evidence="2">Photoreceptor outer segment</location>
    </subcellularLocation>
</comment>
<comment type="tissue specificity">
    <text>Retina and pineal gland.</text>
</comment>
<comment type="similarity">
    <text evidence="4">Belongs to the arrestin family.</text>
</comment>